<dbReference type="EC" id="3.1.-.-" evidence="1"/>
<dbReference type="EMBL" id="CP000232">
    <property type="protein sequence ID" value="ABC18822.1"/>
    <property type="molecule type" value="Genomic_DNA"/>
</dbReference>
<dbReference type="RefSeq" id="YP_429365.1">
    <property type="nucleotide sequence ID" value="NC_007644.1"/>
</dbReference>
<dbReference type="SMR" id="Q2RL67"/>
<dbReference type="STRING" id="264732.Moth_0492"/>
<dbReference type="EnsemblBacteria" id="ABC18822">
    <property type="protein sequence ID" value="ABC18822"/>
    <property type="gene ID" value="Moth_0492"/>
</dbReference>
<dbReference type="KEGG" id="mta:Moth_0492"/>
<dbReference type="PATRIC" id="fig|264732.11.peg.527"/>
<dbReference type="eggNOG" id="COG1343">
    <property type="taxonomic scope" value="Bacteria"/>
</dbReference>
<dbReference type="HOGENOM" id="CLU_161124_3_1_9"/>
<dbReference type="OrthoDB" id="9798176at2"/>
<dbReference type="GO" id="GO:0046872">
    <property type="term" value="F:metal ion binding"/>
    <property type="evidence" value="ECO:0007669"/>
    <property type="project" value="UniProtKB-UniRule"/>
</dbReference>
<dbReference type="GO" id="GO:0004521">
    <property type="term" value="F:RNA endonuclease activity"/>
    <property type="evidence" value="ECO:0007669"/>
    <property type="project" value="InterPro"/>
</dbReference>
<dbReference type="GO" id="GO:0051607">
    <property type="term" value="P:defense response to virus"/>
    <property type="evidence" value="ECO:0007669"/>
    <property type="project" value="UniProtKB-UniRule"/>
</dbReference>
<dbReference type="GO" id="GO:0043571">
    <property type="term" value="P:maintenance of CRISPR repeat elements"/>
    <property type="evidence" value="ECO:0007669"/>
    <property type="project" value="UniProtKB-UniRule"/>
</dbReference>
<dbReference type="CDD" id="cd09725">
    <property type="entry name" value="Cas2_I_II_III"/>
    <property type="match status" value="1"/>
</dbReference>
<dbReference type="Gene3D" id="3.30.70.240">
    <property type="match status" value="1"/>
</dbReference>
<dbReference type="HAMAP" id="MF_01471">
    <property type="entry name" value="Cas2"/>
    <property type="match status" value="1"/>
</dbReference>
<dbReference type="InterPro" id="IPR021127">
    <property type="entry name" value="CRISPR_associated_Cas2"/>
</dbReference>
<dbReference type="InterPro" id="IPR019199">
    <property type="entry name" value="Virulence_VapD/CRISPR_Cas2"/>
</dbReference>
<dbReference type="NCBIfam" id="TIGR01573">
    <property type="entry name" value="cas2"/>
    <property type="match status" value="1"/>
</dbReference>
<dbReference type="PANTHER" id="PTHR34405">
    <property type="entry name" value="CRISPR-ASSOCIATED ENDORIBONUCLEASE CAS2"/>
    <property type="match status" value="1"/>
</dbReference>
<dbReference type="PANTHER" id="PTHR34405:SF3">
    <property type="entry name" value="CRISPR-ASSOCIATED ENDORIBONUCLEASE CAS2 3"/>
    <property type="match status" value="1"/>
</dbReference>
<dbReference type="Pfam" id="PF09827">
    <property type="entry name" value="CRISPR_Cas2"/>
    <property type="match status" value="1"/>
</dbReference>
<dbReference type="PIRSF" id="PIRSF032582">
    <property type="entry name" value="Cas2"/>
    <property type="match status" value="1"/>
</dbReference>
<dbReference type="SUPFAM" id="SSF143430">
    <property type="entry name" value="TTP0101/SSO1404-like"/>
    <property type="match status" value="1"/>
</dbReference>
<reference key="1">
    <citation type="journal article" date="2008" name="Environ. Microbiol.">
        <title>The complete genome sequence of Moorella thermoacetica (f. Clostridium thermoaceticum).</title>
        <authorList>
            <person name="Pierce E."/>
            <person name="Xie G."/>
            <person name="Barabote R.D."/>
            <person name="Saunders E."/>
            <person name="Han C.S."/>
            <person name="Detter J.C."/>
            <person name="Richardson P."/>
            <person name="Brettin T.S."/>
            <person name="Das A."/>
            <person name="Ljungdahl L.G."/>
            <person name="Ragsdale S.W."/>
        </authorList>
    </citation>
    <scope>NUCLEOTIDE SEQUENCE [LARGE SCALE GENOMIC DNA]</scope>
    <source>
        <strain>ATCC 39073 / JCM 9320</strain>
    </source>
</reference>
<comment type="function">
    <text evidence="1">CRISPR (clustered regularly interspaced short palindromic repeat), is an adaptive immune system that provides protection against mobile genetic elements (viruses, transposable elements and conjugative plasmids). CRISPR clusters contain sequences complementary to antecedent mobile elements and target invading nucleic acids. CRISPR clusters are transcribed and processed into CRISPR RNA (crRNA). Functions as a ssRNA-specific endoribonuclease. Involved in the integration of spacer DNA into the CRISPR cassette.</text>
</comment>
<comment type="cofactor">
    <cofactor evidence="1">
        <name>Mg(2+)</name>
        <dbReference type="ChEBI" id="CHEBI:18420"/>
    </cofactor>
</comment>
<comment type="subunit">
    <text evidence="1">Homodimer, forms a heterotetramer with a Cas1 homodimer.</text>
</comment>
<comment type="similarity">
    <text evidence="1">Belongs to the CRISPR-associated endoribonuclease Cas2 protein family.</text>
</comment>
<sequence>MYILITYDVSTETEAGKKRLRKVAQVCKDFGQRVQKSVFECSVNEAQFEQLKHRLLQCIDEKSDSLRIYRLREPAKKYIQEYGVNLTIDFDAPLVL</sequence>
<proteinExistence type="inferred from homology"/>
<protein>
    <recommendedName>
        <fullName evidence="1">CRISPR-associated endoribonuclease Cas2 1</fullName>
        <ecNumber evidence="1">3.1.-.-</ecNumber>
    </recommendedName>
</protein>
<evidence type="ECO:0000255" key="1">
    <source>
        <dbReference type="HAMAP-Rule" id="MF_01471"/>
    </source>
</evidence>
<feature type="chain" id="PRO_0000417722" description="CRISPR-associated endoribonuclease Cas2 1">
    <location>
        <begin position="1"/>
        <end position="96"/>
    </location>
</feature>
<feature type="binding site" evidence="1">
    <location>
        <position position="8"/>
    </location>
    <ligand>
        <name>Mg(2+)</name>
        <dbReference type="ChEBI" id="CHEBI:18420"/>
        <note>catalytic</note>
    </ligand>
</feature>
<accession>Q2RL67</accession>
<keyword id="KW-0051">Antiviral defense</keyword>
<keyword id="KW-0255">Endonuclease</keyword>
<keyword id="KW-0378">Hydrolase</keyword>
<keyword id="KW-0460">Magnesium</keyword>
<keyword id="KW-0479">Metal-binding</keyword>
<keyword id="KW-0540">Nuclease</keyword>
<gene>
    <name evidence="1" type="primary">cas2-1</name>
    <name type="ordered locus">Moth_0492</name>
</gene>
<name>CASA1_MOOTA</name>
<organism>
    <name type="scientific">Moorella thermoacetica (strain ATCC 39073 / JCM 9320)</name>
    <dbReference type="NCBI Taxonomy" id="264732"/>
    <lineage>
        <taxon>Bacteria</taxon>
        <taxon>Bacillati</taxon>
        <taxon>Bacillota</taxon>
        <taxon>Clostridia</taxon>
        <taxon>Moorellales</taxon>
        <taxon>Moorellaceae</taxon>
        <taxon>Moorella</taxon>
    </lineage>
</organism>